<reference key="1">
    <citation type="journal article" date="1997" name="J. Clin. Endocrinol. Metab.">
        <title>Complementary deoxyribonucleic acid cloning and characterization of a putative human axonemal dynein light chain gene.</title>
        <authorList>
            <person name="Kastury K."/>
            <person name="Taylor W.E."/>
            <person name="Shen R."/>
            <person name="Arver S."/>
            <person name="Gutierrez M."/>
            <person name="Fisher C.E."/>
            <person name="Coucke P.J."/>
            <person name="Van Hauwe P."/>
            <person name="Van Camp G."/>
            <person name="Bhasin S."/>
        </authorList>
    </citation>
    <scope>NUCLEOTIDE SEQUENCE [MRNA] (ISOFORM 1)</scope>
    <source>
        <tissue>Fetal liver</tissue>
        <tissue>Fetal lung</tissue>
        <tissue>Spleen</tissue>
    </source>
</reference>
<reference key="2">
    <citation type="journal article" date="2004" name="Nat. Genet.">
        <title>Complete sequencing and characterization of 21,243 full-length human cDNAs.</title>
        <authorList>
            <person name="Ota T."/>
            <person name="Suzuki Y."/>
            <person name="Nishikawa T."/>
            <person name="Otsuki T."/>
            <person name="Sugiyama T."/>
            <person name="Irie R."/>
            <person name="Wakamatsu A."/>
            <person name="Hayashi K."/>
            <person name="Sato H."/>
            <person name="Nagai K."/>
            <person name="Kimura K."/>
            <person name="Makita H."/>
            <person name="Sekine M."/>
            <person name="Obayashi M."/>
            <person name="Nishi T."/>
            <person name="Shibahara T."/>
            <person name="Tanaka T."/>
            <person name="Ishii S."/>
            <person name="Yamamoto J."/>
            <person name="Saito K."/>
            <person name="Kawai Y."/>
            <person name="Isono Y."/>
            <person name="Nakamura Y."/>
            <person name="Nagahari K."/>
            <person name="Murakami K."/>
            <person name="Yasuda T."/>
            <person name="Iwayanagi T."/>
            <person name="Wagatsuma M."/>
            <person name="Shiratori A."/>
            <person name="Sudo H."/>
            <person name="Hosoiri T."/>
            <person name="Kaku Y."/>
            <person name="Kodaira H."/>
            <person name="Kondo H."/>
            <person name="Sugawara M."/>
            <person name="Takahashi M."/>
            <person name="Kanda K."/>
            <person name="Yokoi T."/>
            <person name="Furuya T."/>
            <person name="Kikkawa E."/>
            <person name="Omura Y."/>
            <person name="Abe K."/>
            <person name="Kamihara K."/>
            <person name="Katsuta N."/>
            <person name="Sato K."/>
            <person name="Tanikawa M."/>
            <person name="Yamazaki M."/>
            <person name="Ninomiya K."/>
            <person name="Ishibashi T."/>
            <person name="Yamashita H."/>
            <person name="Murakawa K."/>
            <person name="Fujimori K."/>
            <person name="Tanai H."/>
            <person name="Kimata M."/>
            <person name="Watanabe M."/>
            <person name="Hiraoka S."/>
            <person name="Chiba Y."/>
            <person name="Ishida S."/>
            <person name="Ono Y."/>
            <person name="Takiguchi S."/>
            <person name="Watanabe S."/>
            <person name="Yosida M."/>
            <person name="Hotuta T."/>
            <person name="Kusano J."/>
            <person name="Kanehori K."/>
            <person name="Takahashi-Fujii A."/>
            <person name="Hara H."/>
            <person name="Tanase T.-O."/>
            <person name="Nomura Y."/>
            <person name="Togiya S."/>
            <person name="Komai F."/>
            <person name="Hara R."/>
            <person name="Takeuchi K."/>
            <person name="Arita M."/>
            <person name="Imose N."/>
            <person name="Musashino K."/>
            <person name="Yuuki H."/>
            <person name="Oshima A."/>
            <person name="Sasaki N."/>
            <person name="Aotsuka S."/>
            <person name="Yoshikawa Y."/>
            <person name="Matsunawa H."/>
            <person name="Ichihara T."/>
            <person name="Shiohata N."/>
            <person name="Sano S."/>
            <person name="Moriya S."/>
            <person name="Momiyama H."/>
            <person name="Satoh N."/>
            <person name="Takami S."/>
            <person name="Terashima Y."/>
            <person name="Suzuki O."/>
            <person name="Nakagawa S."/>
            <person name="Senoh A."/>
            <person name="Mizoguchi H."/>
            <person name="Goto Y."/>
            <person name="Shimizu F."/>
            <person name="Wakebe H."/>
            <person name="Hishigaki H."/>
            <person name="Watanabe T."/>
            <person name="Sugiyama A."/>
            <person name="Takemoto M."/>
            <person name="Kawakami B."/>
            <person name="Yamazaki M."/>
            <person name="Watanabe K."/>
            <person name="Kumagai A."/>
            <person name="Itakura S."/>
            <person name="Fukuzumi Y."/>
            <person name="Fujimori Y."/>
            <person name="Komiyama M."/>
            <person name="Tashiro H."/>
            <person name="Tanigami A."/>
            <person name="Fujiwara T."/>
            <person name="Ono T."/>
            <person name="Yamada K."/>
            <person name="Fujii Y."/>
            <person name="Ozaki K."/>
            <person name="Hirao M."/>
            <person name="Ohmori Y."/>
            <person name="Kawabata A."/>
            <person name="Hikiji T."/>
            <person name="Kobatake N."/>
            <person name="Inagaki H."/>
            <person name="Ikema Y."/>
            <person name="Okamoto S."/>
            <person name="Okitani R."/>
            <person name="Kawakami T."/>
            <person name="Noguchi S."/>
            <person name="Itoh T."/>
            <person name="Shigeta K."/>
            <person name="Senba T."/>
            <person name="Matsumura K."/>
            <person name="Nakajima Y."/>
            <person name="Mizuno T."/>
            <person name="Morinaga M."/>
            <person name="Sasaki M."/>
            <person name="Togashi T."/>
            <person name="Oyama M."/>
            <person name="Hata H."/>
            <person name="Watanabe M."/>
            <person name="Komatsu T."/>
            <person name="Mizushima-Sugano J."/>
            <person name="Satoh T."/>
            <person name="Shirai Y."/>
            <person name="Takahashi Y."/>
            <person name="Nakagawa K."/>
            <person name="Okumura K."/>
            <person name="Nagase T."/>
            <person name="Nomura N."/>
            <person name="Kikuchi H."/>
            <person name="Masuho Y."/>
            <person name="Yamashita R."/>
            <person name="Nakai K."/>
            <person name="Yada T."/>
            <person name="Nakamura Y."/>
            <person name="Ohara O."/>
            <person name="Isogai T."/>
            <person name="Sugano S."/>
        </authorList>
    </citation>
    <scope>NUCLEOTIDE SEQUENCE [LARGE SCALE MRNA] (ISOFORMS 1 AND 2)</scope>
    <source>
        <tissue>Brain</tissue>
        <tissue>Caudate nucleus</tissue>
    </source>
</reference>
<reference key="3">
    <citation type="journal article" date="2007" name="BMC Genomics">
        <title>The full-ORF clone resource of the German cDNA consortium.</title>
        <authorList>
            <person name="Bechtel S."/>
            <person name="Rosenfelder H."/>
            <person name="Duda A."/>
            <person name="Schmidt C.P."/>
            <person name="Ernst U."/>
            <person name="Wellenreuther R."/>
            <person name="Mehrle A."/>
            <person name="Schuster C."/>
            <person name="Bahr A."/>
            <person name="Bloecker H."/>
            <person name="Heubner D."/>
            <person name="Hoerlein A."/>
            <person name="Michel G."/>
            <person name="Wedler H."/>
            <person name="Koehrer K."/>
            <person name="Ottenwaelder B."/>
            <person name="Poustka A."/>
            <person name="Wiemann S."/>
            <person name="Schupp I."/>
        </authorList>
    </citation>
    <scope>NUCLEOTIDE SEQUENCE [LARGE SCALE MRNA] (ISOFORM 1)</scope>
    <source>
        <tissue>Cervix</tissue>
    </source>
</reference>
<reference key="4">
    <citation type="journal article" date="2006" name="Nature">
        <title>The DNA sequence and biological annotation of human chromosome 1.</title>
        <authorList>
            <person name="Gregory S.G."/>
            <person name="Barlow K.F."/>
            <person name="McLay K.E."/>
            <person name="Kaul R."/>
            <person name="Swarbreck D."/>
            <person name="Dunham A."/>
            <person name="Scott C.E."/>
            <person name="Howe K.L."/>
            <person name="Woodfine K."/>
            <person name="Spencer C.C.A."/>
            <person name="Jones M.C."/>
            <person name="Gillson C."/>
            <person name="Searle S."/>
            <person name="Zhou Y."/>
            <person name="Kokocinski F."/>
            <person name="McDonald L."/>
            <person name="Evans R."/>
            <person name="Phillips K."/>
            <person name="Atkinson A."/>
            <person name="Cooper R."/>
            <person name="Jones C."/>
            <person name="Hall R.E."/>
            <person name="Andrews T.D."/>
            <person name="Lloyd C."/>
            <person name="Ainscough R."/>
            <person name="Almeida J.P."/>
            <person name="Ambrose K.D."/>
            <person name="Anderson F."/>
            <person name="Andrew R.W."/>
            <person name="Ashwell R.I.S."/>
            <person name="Aubin K."/>
            <person name="Babbage A.K."/>
            <person name="Bagguley C.L."/>
            <person name="Bailey J."/>
            <person name="Beasley H."/>
            <person name="Bethel G."/>
            <person name="Bird C.P."/>
            <person name="Bray-Allen S."/>
            <person name="Brown J.Y."/>
            <person name="Brown A.J."/>
            <person name="Buckley D."/>
            <person name="Burton J."/>
            <person name="Bye J."/>
            <person name="Carder C."/>
            <person name="Chapman J.C."/>
            <person name="Clark S.Y."/>
            <person name="Clarke G."/>
            <person name="Clee C."/>
            <person name="Cobley V."/>
            <person name="Collier R.E."/>
            <person name="Corby N."/>
            <person name="Coville G.J."/>
            <person name="Davies J."/>
            <person name="Deadman R."/>
            <person name="Dunn M."/>
            <person name="Earthrowl M."/>
            <person name="Ellington A.G."/>
            <person name="Errington H."/>
            <person name="Frankish A."/>
            <person name="Frankland J."/>
            <person name="French L."/>
            <person name="Garner P."/>
            <person name="Garnett J."/>
            <person name="Gay L."/>
            <person name="Ghori M.R.J."/>
            <person name="Gibson R."/>
            <person name="Gilby L.M."/>
            <person name="Gillett W."/>
            <person name="Glithero R.J."/>
            <person name="Grafham D.V."/>
            <person name="Griffiths C."/>
            <person name="Griffiths-Jones S."/>
            <person name="Grocock R."/>
            <person name="Hammond S."/>
            <person name="Harrison E.S.I."/>
            <person name="Hart E."/>
            <person name="Haugen E."/>
            <person name="Heath P.D."/>
            <person name="Holmes S."/>
            <person name="Holt K."/>
            <person name="Howden P.J."/>
            <person name="Hunt A.R."/>
            <person name="Hunt S.E."/>
            <person name="Hunter G."/>
            <person name="Isherwood J."/>
            <person name="James R."/>
            <person name="Johnson C."/>
            <person name="Johnson D."/>
            <person name="Joy A."/>
            <person name="Kay M."/>
            <person name="Kershaw J.K."/>
            <person name="Kibukawa M."/>
            <person name="Kimberley A.M."/>
            <person name="King A."/>
            <person name="Knights A.J."/>
            <person name="Lad H."/>
            <person name="Laird G."/>
            <person name="Lawlor S."/>
            <person name="Leongamornlert D.A."/>
            <person name="Lloyd D.M."/>
            <person name="Loveland J."/>
            <person name="Lovell J."/>
            <person name="Lush M.J."/>
            <person name="Lyne R."/>
            <person name="Martin S."/>
            <person name="Mashreghi-Mohammadi M."/>
            <person name="Matthews L."/>
            <person name="Matthews N.S.W."/>
            <person name="McLaren S."/>
            <person name="Milne S."/>
            <person name="Mistry S."/>
            <person name="Moore M.J.F."/>
            <person name="Nickerson T."/>
            <person name="O'Dell C.N."/>
            <person name="Oliver K."/>
            <person name="Palmeiri A."/>
            <person name="Palmer S.A."/>
            <person name="Parker A."/>
            <person name="Patel D."/>
            <person name="Pearce A.V."/>
            <person name="Peck A.I."/>
            <person name="Pelan S."/>
            <person name="Phelps K."/>
            <person name="Phillimore B.J."/>
            <person name="Plumb R."/>
            <person name="Rajan J."/>
            <person name="Raymond C."/>
            <person name="Rouse G."/>
            <person name="Saenphimmachak C."/>
            <person name="Sehra H.K."/>
            <person name="Sheridan E."/>
            <person name="Shownkeen R."/>
            <person name="Sims S."/>
            <person name="Skuce C.D."/>
            <person name="Smith M."/>
            <person name="Steward C."/>
            <person name="Subramanian S."/>
            <person name="Sycamore N."/>
            <person name="Tracey A."/>
            <person name="Tromans A."/>
            <person name="Van Helmond Z."/>
            <person name="Wall M."/>
            <person name="Wallis J.M."/>
            <person name="White S."/>
            <person name="Whitehead S.L."/>
            <person name="Wilkinson J.E."/>
            <person name="Willey D.L."/>
            <person name="Williams H."/>
            <person name="Wilming L."/>
            <person name="Wray P.W."/>
            <person name="Wu Z."/>
            <person name="Coulson A."/>
            <person name="Vaudin M."/>
            <person name="Sulston J.E."/>
            <person name="Durbin R.M."/>
            <person name="Hubbard T."/>
            <person name="Wooster R."/>
            <person name="Dunham I."/>
            <person name="Carter N.P."/>
            <person name="McVean G."/>
            <person name="Ross M.T."/>
            <person name="Harrow J."/>
            <person name="Olson M.V."/>
            <person name="Beck S."/>
            <person name="Rogers J."/>
            <person name="Bentley D.R."/>
        </authorList>
    </citation>
    <scope>NUCLEOTIDE SEQUENCE [LARGE SCALE GENOMIC DNA]</scope>
</reference>
<reference key="5">
    <citation type="journal article" date="2004" name="Genome Res.">
        <title>The status, quality, and expansion of the NIH full-length cDNA project: the Mammalian Gene Collection (MGC).</title>
        <authorList>
            <consortium name="The MGC Project Team"/>
        </authorList>
    </citation>
    <scope>NUCLEOTIDE SEQUENCE [LARGE SCALE MRNA] (ISOFORM 1)</scope>
    <source>
        <tissue>Brain</tissue>
        <tissue>PNS</tissue>
    </source>
</reference>
<reference key="6">
    <citation type="journal article" date="2016" name="Hum. Mutat.">
        <title>Mutations in GAS8, a gene encoding a nexin-dynein regulatory complex subunit, cause primary ciliary dyskinesia with axonemal disorganization.</title>
        <authorList>
            <person name="Jeanson L."/>
            <person name="Thomas L."/>
            <person name="Copin B."/>
            <person name="Coste A."/>
            <person name="Sermet-Gaudelus I."/>
            <person name="Dastot-Le Moal F."/>
            <person name="Duquesnoy P."/>
            <person name="Montantin G."/>
            <person name="Collot N."/>
            <person name="Tissier S."/>
            <person name="Papon J.F."/>
            <person name="Clement A."/>
            <person name="Louis B."/>
            <person name="Escudier E."/>
            <person name="Amselem S."/>
            <person name="Legendre M."/>
        </authorList>
    </citation>
    <scope>SUBCELLULAR LOCATION</scope>
</reference>
<reference key="7">
    <citation type="journal article" date="2020" name="Nat. Commun.">
        <title>CFAP45 deficiency causes situs abnormalities and asthenospermia by disrupting an axonemal adenine nucleotide homeostasis module.</title>
        <authorList>
            <person name="Dougherty G.W."/>
            <person name="Mizuno K."/>
            <person name="Noethe-Menchen T."/>
            <person name="Ikawa Y."/>
            <person name="Boldt K."/>
            <person name="Ta-Shma A."/>
            <person name="Aprea I."/>
            <person name="Minegishi K."/>
            <person name="Pang Y.P."/>
            <person name="Pennekamp P."/>
            <person name="Loges N.T."/>
            <person name="Raidt J."/>
            <person name="Hjeij R."/>
            <person name="Wallmeier J."/>
            <person name="Mussaffi H."/>
            <person name="Perles Z."/>
            <person name="Elpeleg O."/>
            <person name="Rabert F."/>
            <person name="Shiratori H."/>
            <person name="Letteboer S.J."/>
            <person name="Horn N."/>
            <person name="Young S."/>
            <person name="Struenker T."/>
            <person name="Stumme F."/>
            <person name="Werner C."/>
            <person name="Olbrich H."/>
            <person name="Takaoka K."/>
            <person name="Ide T."/>
            <person name="Twan W.K."/>
            <person name="Biebach L."/>
            <person name="Grosse-Onnebrink J."/>
            <person name="Klinkenbusch J.A."/>
            <person name="Praveen K."/>
            <person name="Bracht D.C."/>
            <person name="Hoeben I.M."/>
            <person name="Junger K."/>
            <person name="Guetzlaff J."/>
            <person name="Cindric S."/>
            <person name="Aviram M."/>
            <person name="Kaiser T."/>
            <person name="Memari Y."/>
            <person name="Dzeja P.P."/>
            <person name="Dworniczak B."/>
            <person name="Ueffing M."/>
            <person name="Roepman R."/>
            <person name="Bartscherer K."/>
            <person name="Katsanis N."/>
            <person name="Davis E.E."/>
            <person name="Amirav I."/>
            <person name="Hamada H."/>
            <person name="Omran H."/>
        </authorList>
    </citation>
    <scope>INTERACTION WITH CFAP45</scope>
</reference>
<reference key="8">
    <citation type="journal article" date="2006" name="Science">
        <title>The consensus coding sequences of human breast and colorectal cancers.</title>
        <authorList>
            <person name="Sjoeblom T."/>
            <person name="Jones S."/>
            <person name="Wood L.D."/>
            <person name="Parsons D.W."/>
            <person name="Lin J."/>
            <person name="Barber T.D."/>
            <person name="Mandelker D."/>
            <person name="Leary R.J."/>
            <person name="Ptak J."/>
            <person name="Silliman N."/>
            <person name="Szabo S."/>
            <person name="Buckhaults P."/>
            <person name="Farrell C."/>
            <person name="Meeh P."/>
            <person name="Markowitz S.D."/>
            <person name="Willis J."/>
            <person name="Dawson D."/>
            <person name="Willson J.K.V."/>
            <person name="Gazdar A.F."/>
            <person name="Hartigan J."/>
            <person name="Wu L."/>
            <person name="Liu C."/>
            <person name="Parmigiani G."/>
            <person name="Park B.H."/>
            <person name="Bachman K.E."/>
            <person name="Papadopoulos N."/>
            <person name="Vogelstein B."/>
            <person name="Kinzler K.W."/>
            <person name="Velculescu V.E."/>
        </authorList>
    </citation>
    <scope>VARIANT [LARGE SCALE ANALYSIS] MET-120</scope>
</reference>
<reference key="9">
    <citation type="journal article" date="2019" name="Am. J. Hum. Genet.">
        <title>Mutations in DNAH17, Encoding a Sperm-Specific Axonemal Outer Dynein Arm Heavy Chain, Cause Isolated Male Infertility Due to Asthenozoospermia.</title>
        <authorList>
            <person name="Whitfield M."/>
            <person name="Thomas L."/>
            <person name="Bequignon E."/>
            <person name="Schmitt A."/>
            <person name="Stouvenel L."/>
            <person name="Montantin G."/>
            <person name="Tissier S."/>
            <person name="Duquesnoy P."/>
            <person name="Copin B."/>
            <person name="Chantot S."/>
            <person name="Dastot F."/>
            <person name="Faucon C."/>
            <person name="Barbotin A.L."/>
            <person name="Loyens A."/>
            <person name="Siffroi J.P."/>
            <person name="Papon J.F."/>
            <person name="Escudier E."/>
            <person name="Amselem S."/>
            <person name="Mitchell V."/>
            <person name="Toure A."/>
            <person name="Legendre M."/>
        </authorList>
    </citation>
    <scope>TISSUE SPECIFICITY</scope>
    <scope>SUBCELLULAR LOCATION</scope>
</reference>
<reference key="10">
    <citation type="journal article" date="2023" name="Cell Death Dis.">
        <title>DNALI1 deficiency causes male infertility with severe asthenozoospermia in humans and mice by disrupting the assembly of the flagellar inner dynein arms and fibrous sheath.</title>
        <authorList>
            <person name="Wu H."/>
            <person name="Liu Y."/>
            <person name="Li Y."/>
            <person name="Li K."/>
            <person name="Xu C."/>
            <person name="Gao Y."/>
            <person name="Lv M."/>
            <person name="Guo R."/>
            <person name="Xu Y."/>
            <person name="Zhou P."/>
            <person name="Wei Z."/>
            <person name="Hua R."/>
            <person name="He X."/>
            <person name="Cao Y."/>
        </authorList>
    </citation>
    <scope>INVOLVEMENT IN SPGF83</scope>
    <scope>FUNCTION</scope>
    <scope>SUBCELLULAR LOCATION</scope>
</reference>
<gene>
    <name evidence="12" type="primary">DNALI1</name>
</gene>
<dbReference type="EMBL" id="AF006386">
    <property type="protein sequence ID" value="AAB69193.1"/>
    <property type="status" value="ALT_FRAME"/>
    <property type="molecule type" value="mRNA"/>
</dbReference>
<dbReference type="EMBL" id="AK295199">
    <property type="protein sequence ID" value="BAG58198.1"/>
    <property type="molecule type" value="mRNA"/>
</dbReference>
<dbReference type="EMBL" id="AK290502">
    <property type="protein sequence ID" value="BAF83191.1"/>
    <property type="molecule type" value="mRNA"/>
</dbReference>
<dbReference type="EMBL" id="BX647913">
    <property type="protein sequence ID" value="CAI46082.1"/>
    <property type="status" value="ALT_INIT"/>
    <property type="molecule type" value="mRNA"/>
</dbReference>
<dbReference type="EMBL" id="AL034379">
    <property type="status" value="NOT_ANNOTATED_CDS"/>
    <property type="molecule type" value="Genomic_DNA"/>
</dbReference>
<dbReference type="EMBL" id="BC039074">
    <property type="protein sequence ID" value="AAH39074.1"/>
    <property type="molecule type" value="mRNA"/>
</dbReference>
<dbReference type="EMBL" id="BC046117">
    <property type="protein sequence ID" value="AAH46117.1"/>
    <property type="molecule type" value="mRNA"/>
</dbReference>
<dbReference type="CCDS" id="CCDS420.2">
    <molecule id="O14645-1"/>
</dbReference>
<dbReference type="RefSeq" id="NP_003453.2">
    <molecule id="O14645-1"/>
    <property type="nucleotide sequence ID" value="NM_003462.3"/>
</dbReference>
<dbReference type="RefSeq" id="XP_005271229.1">
    <property type="nucleotide sequence ID" value="XM_005271172.2"/>
</dbReference>
<dbReference type="PDB" id="8J07">
    <property type="method" value="EM"/>
    <property type="resolution" value="4.10 A"/>
    <property type="chains" value="e0/e1/e2/e3/e4/e5/e6/e7/e8/e9=1-258"/>
</dbReference>
<dbReference type="PDBsum" id="8J07"/>
<dbReference type="EMDB" id="EMD-35888"/>
<dbReference type="SMR" id="O14645"/>
<dbReference type="BioGRID" id="113577">
    <property type="interactions" value="18"/>
</dbReference>
<dbReference type="FunCoup" id="O14645">
    <property type="interactions" value="209"/>
</dbReference>
<dbReference type="IntAct" id="O14645">
    <property type="interactions" value="84"/>
</dbReference>
<dbReference type="MINT" id="O14645"/>
<dbReference type="STRING" id="9606.ENSP00000296218"/>
<dbReference type="GlyGen" id="O14645">
    <property type="glycosylation" value="1 site, 1 O-linked glycan (1 site)"/>
</dbReference>
<dbReference type="iPTMnet" id="O14645"/>
<dbReference type="PhosphoSitePlus" id="O14645"/>
<dbReference type="BioMuta" id="DNALI1"/>
<dbReference type="MassIVE" id="O14645"/>
<dbReference type="PaxDb" id="9606-ENSP00000296218"/>
<dbReference type="PeptideAtlas" id="O14645"/>
<dbReference type="ProteomicsDB" id="4231"/>
<dbReference type="ProteomicsDB" id="48141">
    <molecule id="O14645-1"/>
</dbReference>
<dbReference type="Antibodypedia" id="31735">
    <property type="antibodies" value="203 antibodies from 22 providers"/>
</dbReference>
<dbReference type="DNASU" id="7802"/>
<dbReference type="Ensembl" id="ENST00000652629.1">
    <molecule id="O14645-1"/>
    <property type="protein sequence ID" value="ENSP00000498620.1"/>
    <property type="gene ID" value="ENSG00000163879.11"/>
</dbReference>
<dbReference type="GeneID" id="7802"/>
<dbReference type="KEGG" id="hsa:7802"/>
<dbReference type="MANE-Select" id="ENST00000652629.1">
    <property type="protein sequence ID" value="ENSP00000498620.1"/>
    <property type="RefSeq nucleotide sequence ID" value="NM_003462.5"/>
    <property type="RefSeq protein sequence ID" value="NP_003453.3"/>
</dbReference>
<dbReference type="UCSC" id="uc001cbj.3">
    <molecule id="O14645-1"/>
    <property type="organism name" value="human"/>
</dbReference>
<dbReference type="AGR" id="HGNC:14353"/>
<dbReference type="CTD" id="7802"/>
<dbReference type="DisGeNET" id="7802"/>
<dbReference type="GeneCards" id="DNALI1"/>
<dbReference type="HGNC" id="HGNC:14353">
    <property type="gene designation" value="DNALI1"/>
</dbReference>
<dbReference type="HPA" id="ENSG00000163879">
    <property type="expression patterns" value="Tissue enhanced (choroid plexus, fallopian tube)"/>
</dbReference>
<dbReference type="MalaCards" id="DNALI1"/>
<dbReference type="MIM" id="602135">
    <property type="type" value="gene"/>
</dbReference>
<dbReference type="MIM" id="620354">
    <property type="type" value="phenotype"/>
</dbReference>
<dbReference type="neXtProt" id="NX_O14645"/>
<dbReference type="OpenTargets" id="ENSG00000163879"/>
<dbReference type="PharmGKB" id="PA38381"/>
<dbReference type="VEuPathDB" id="HostDB:ENSG00000163879"/>
<dbReference type="eggNOG" id="KOG4001">
    <property type="taxonomic scope" value="Eukaryota"/>
</dbReference>
<dbReference type="GeneTree" id="ENSGT00390000003012"/>
<dbReference type="HOGENOM" id="CLU_072652_0_0_1"/>
<dbReference type="InParanoid" id="O14645"/>
<dbReference type="OrthoDB" id="273640at2759"/>
<dbReference type="PAN-GO" id="O14645">
    <property type="GO annotations" value="3 GO annotations based on evolutionary models"/>
</dbReference>
<dbReference type="PhylomeDB" id="O14645"/>
<dbReference type="TreeFam" id="TF314891"/>
<dbReference type="PathwayCommons" id="O14645"/>
<dbReference type="SignaLink" id="O14645"/>
<dbReference type="SIGNOR" id="O14645"/>
<dbReference type="BioGRID-ORCS" id="7802">
    <property type="hits" value="8 hits in 1143 CRISPR screens"/>
</dbReference>
<dbReference type="ChiTaRS" id="DNALI1">
    <property type="organism name" value="human"/>
</dbReference>
<dbReference type="GenomeRNAi" id="7802"/>
<dbReference type="Pharos" id="O14645">
    <property type="development level" value="Tbio"/>
</dbReference>
<dbReference type="PRO" id="PR:O14645"/>
<dbReference type="Proteomes" id="UP000005640">
    <property type="component" value="Chromosome 1"/>
</dbReference>
<dbReference type="RNAct" id="O14645">
    <property type="molecule type" value="protein"/>
</dbReference>
<dbReference type="Bgee" id="ENSG00000163879">
    <property type="expression patterns" value="Expressed in right uterine tube and 132 other cell types or tissues"/>
</dbReference>
<dbReference type="ExpressionAtlas" id="O14645">
    <property type="expression patterns" value="baseline and differential"/>
</dbReference>
<dbReference type="GO" id="GO:0097729">
    <property type="term" value="C:9+2 motile cilium"/>
    <property type="evidence" value="ECO:0000314"/>
    <property type="project" value="GO_Central"/>
</dbReference>
<dbReference type="GO" id="GO:0005930">
    <property type="term" value="C:axoneme"/>
    <property type="evidence" value="ECO:0000314"/>
    <property type="project" value="UniProtKB"/>
</dbReference>
<dbReference type="GO" id="GO:0097546">
    <property type="term" value="C:ciliary base"/>
    <property type="evidence" value="ECO:0000318"/>
    <property type="project" value="GO_Central"/>
</dbReference>
<dbReference type="GO" id="GO:0005929">
    <property type="term" value="C:cilium"/>
    <property type="evidence" value="ECO:0000314"/>
    <property type="project" value="HPA"/>
</dbReference>
<dbReference type="GO" id="GO:0005737">
    <property type="term" value="C:cytoplasm"/>
    <property type="evidence" value="ECO:0000314"/>
    <property type="project" value="BHF-UCL"/>
</dbReference>
<dbReference type="GO" id="GO:0120293">
    <property type="term" value="C:dynein axonemal particle"/>
    <property type="evidence" value="ECO:0000250"/>
    <property type="project" value="UniProtKB"/>
</dbReference>
<dbReference type="GO" id="GO:0030286">
    <property type="term" value="C:dynein complex"/>
    <property type="evidence" value="ECO:0007669"/>
    <property type="project" value="UniProtKB-KW"/>
</dbReference>
<dbReference type="GO" id="GO:0030175">
    <property type="term" value="C:filopodium"/>
    <property type="evidence" value="ECO:0007669"/>
    <property type="project" value="Ensembl"/>
</dbReference>
<dbReference type="GO" id="GO:0045171">
    <property type="term" value="C:intercellular bridge"/>
    <property type="evidence" value="ECO:0000314"/>
    <property type="project" value="HPA"/>
</dbReference>
<dbReference type="GO" id="GO:0015630">
    <property type="term" value="C:microtubule cytoskeleton"/>
    <property type="evidence" value="ECO:0000314"/>
    <property type="project" value="HPA"/>
</dbReference>
<dbReference type="GO" id="GO:0072686">
    <property type="term" value="C:mitotic spindle"/>
    <property type="evidence" value="ECO:0000314"/>
    <property type="project" value="HPA"/>
</dbReference>
<dbReference type="GO" id="GO:0031514">
    <property type="term" value="C:motile cilium"/>
    <property type="evidence" value="ECO:0000314"/>
    <property type="project" value="UniProtKB"/>
</dbReference>
<dbReference type="GO" id="GO:0005654">
    <property type="term" value="C:nucleoplasm"/>
    <property type="evidence" value="ECO:0000314"/>
    <property type="project" value="HPA"/>
</dbReference>
<dbReference type="GO" id="GO:0036126">
    <property type="term" value="C:sperm flagellum"/>
    <property type="evidence" value="ECO:0000314"/>
    <property type="project" value="UniProtKB"/>
</dbReference>
<dbReference type="GO" id="GO:0045504">
    <property type="term" value="F:dynein heavy chain binding"/>
    <property type="evidence" value="ECO:0000318"/>
    <property type="project" value="GO_Central"/>
</dbReference>
<dbReference type="GO" id="GO:0120316">
    <property type="term" value="P:sperm flagellum assembly"/>
    <property type="evidence" value="ECO:0000315"/>
    <property type="project" value="UniProtKB"/>
</dbReference>
<dbReference type="InterPro" id="IPR019347">
    <property type="entry name" value="Axonemal_dynein_light_chain"/>
</dbReference>
<dbReference type="PANTHER" id="PTHR13183:SF0">
    <property type="entry name" value="AXONEMAL DYNEIN LIGHT INTERMEDIATE POLYPEPTIDE 1"/>
    <property type="match status" value="1"/>
</dbReference>
<dbReference type="PANTHER" id="PTHR13183">
    <property type="entry name" value="AXONEMAL INNER ARM DYNEIN LIGHT CHAIN 28"/>
    <property type="match status" value="1"/>
</dbReference>
<dbReference type="Pfam" id="PF10211">
    <property type="entry name" value="Ax_dynein_light"/>
    <property type="match status" value="1"/>
</dbReference>
<name>IDLC_HUMAN</name>
<keyword id="KW-0002">3D-structure</keyword>
<keyword id="KW-0025">Alternative splicing</keyword>
<keyword id="KW-0966">Cell projection</keyword>
<keyword id="KW-0969">Cilium</keyword>
<keyword id="KW-0175">Coiled coil</keyword>
<keyword id="KW-0963">Cytoplasm</keyword>
<keyword id="KW-0243">Dynein</keyword>
<keyword id="KW-0282">Flagellum</keyword>
<keyword id="KW-0505">Motor protein</keyword>
<keyword id="KW-1267">Proteomics identification</keyword>
<keyword id="KW-1185">Reference proteome</keyword>
<comment type="function">
    <text evidence="9">Involved in sperm flagellum assembly.</text>
</comment>
<comment type="subunit">
    <text evidence="2 8">Interacts with CFAP45 (PubMed:33139725). Interacts with DYNC1H1 (By similarity).</text>
</comment>
<comment type="interaction">
    <interactant intactId="EBI-395638">
        <id>O14645</id>
    </interactant>
    <interactant intactId="EBI-8466265">
        <id>Q96MA6</id>
        <label>AK8</label>
    </interactant>
    <organismsDiffer>false</organismsDiffer>
    <experiments>3</experiments>
</comment>
<comment type="interaction">
    <interactant intactId="EBI-395638">
        <id>O14645</id>
    </interactant>
    <interactant intactId="EBI-11022349">
        <id>Q99996-3</id>
        <label>AKAP9</label>
    </interactant>
    <organismsDiffer>false</organismsDiffer>
    <experiments>3</experiments>
</comment>
<comment type="interaction">
    <interactant intactId="EBI-395638">
        <id>O14645</id>
    </interactant>
    <interactant intactId="EBI-3905054">
        <id>P13196</id>
        <label>ALAS1</label>
    </interactant>
    <organismsDiffer>false</organismsDiffer>
    <experiments>3</experiments>
</comment>
<comment type="interaction">
    <interactant intactId="EBI-395638">
        <id>O14645</id>
    </interactant>
    <interactant intactId="EBI-2556852">
        <id>P09525</id>
        <label>ANXA4</label>
    </interactant>
    <organismsDiffer>false</organismsDiffer>
    <experiments>3</experiments>
</comment>
<comment type="interaction">
    <interactant intactId="EBI-395638">
        <id>O14645</id>
    </interactant>
    <interactant intactId="EBI-2556915">
        <id>P13928</id>
        <label>ANXA8</label>
    </interactant>
    <organismsDiffer>false</organismsDiffer>
    <experiments>3</experiments>
</comment>
<comment type="interaction">
    <interactant intactId="EBI-395638">
        <id>O14645</id>
    </interactant>
    <interactant intactId="EBI-1044383">
        <id>O00203</id>
        <label>AP3B1</label>
    </interactant>
    <organismsDiffer>false</organismsDiffer>
    <experiments>3</experiments>
</comment>
<comment type="interaction">
    <interactant intactId="EBI-395638">
        <id>O14645</id>
    </interactant>
    <interactant intactId="EBI-77613">
        <id>P05067</id>
        <label>APP</label>
    </interactant>
    <organismsDiffer>false</organismsDiffer>
    <experiments>3</experiments>
</comment>
<comment type="interaction">
    <interactant intactId="EBI-395638">
        <id>O14645</id>
    </interactant>
    <interactant intactId="EBI-25843552">
        <id>Q96DX5-3</id>
        <label>ASB9</label>
    </interactant>
    <organismsDiffer>false</organismsDiffer>
    <experiments>3</experiments>
</comment>
<comment type="interaction">
    <interactant intactId="EBI-395638">
        <id>O14645</id>
    </interactant>
    <interactant intactId="EBI-9089489">
        <id>Q96FT7-4</id>
        <label>ASIC4</label>
    </interactant>
    <organismsDiffer>false</organismsDiffer>
    <experiments>3</experiments>
</comment>
<comment type="interaction">
    <interactant intactId="EBI-395638">
        <id>O14645</id>
    </interactant>
    <interactant intactId="EBI-2891281">
        <id>P15313</id>
        <label>ATP6V1B1</label>
    </interactant>
    <organismsDiffer>false</organismsDiffer>
    <experiments>3</experiments>
</comment>
<comment type="interaction">
    <interactant intactId="EBI-395638">
        <id>O14645</id>
    </interactant>
    <interactant intactId="EBI-25834445">
        <id>P54687-4</id>
        <label>BCAT1</label>
    </interactant>
    <organismsDiffer>false</organismsDiffer>
    <experiments>3</experiments>
</comment>
<comment type="interaction">
    <interactant intactId="EBI-395638">
        <id>O14645</id>
    </interactant>
    <interactant intactId="EBI-949378">
        <id>Q14457</id>
        <label>BECN1</label>
    </interactant>
    <organismsDiffer>false</organismsDiffer>
    <experiments>3</experiments>
</comment>
<comment type="interaction">
    <interactant intactId="EBI-395638">
        <id>O14645</id>
    </interactant>
    <interactant intactId="EBI-12300031">
        <id>Q9NNX6-10</id>
        <label>CD209</label>
    </interactant>
    <organismsDiffer>false</organismsDiffer>
    <experiments>3</experiments>
</comment>
<comment type="interaction">
    <interactant intactId="EBI-395638">
        <id>O14645</id>
    </interactant>
    <interactant intactId="EBI-1210604">
        <id>Q7Z7K6</id>
        <label>CENPV</label>
    </interactant>
    <organismsDiffer>false</organismsDiffer>
    <experiments>3</experiments>
</comment>
<comment type="interaction">
    <interactant intactId="EBI-395638">
        <id>O14645</id>
    </interactant>
    <interactant intactId="EBI-749253">
        <id>Q8WUX9</id>
        <label>CHMP7</label>
    </interactant>
    <organismsDiffer>false</organismsDiffer>
    <experiments>3</experiments>
</comment>
<comment type="interaction">
    <interactant intactId="EBI-395638">
        <id>O14645</id>
    </interactant>
    <interactant intactId="EBI-751783">
        <id>Q9UJU6</id>
        <label>DBNL</label>
    </interactant>
    <organismsDiffer>false</organismsDiffer>
    <experiments>3</experiments>
</comment>
<comment type="interaction">
    <interactant intactId="EBI-395638">
        <id>O14645</id>
    </interactant>
    <interactant intactId="EBI-748248">
        <id>Q8WTU0</id>
        <label>DDI1</label>
    </interactant>
    <organismsDiffer>false</organismsDiffer>
    <experiments>3</experiments>
</comment>
<comment type="interaction">
    <interactant intactId="EBI-395638">
        <id>O14645</id>
    </interactant>
    <interactant intactId="EBI-21529239">
        <id>Q86TI2-2</id>
        <label>DPP9</label>
    </interactant>
    <organismsDiffer>false</organismsDiffer>
    <experiments>3</experiments>
</comment>
<comment type="interaction">
    <interactant intactId="EBI-395638">
        <id>O14645</id>
    </interactant>
    <interactant intactId="EBI-12275416">
        <id>Q14117</id>
        <label>DPYS</label>
    </interactant>
    <organismsDiffer>false</organismsDiffer>
    <experiments>3</experiments>
</comment>
<comment type="interaction">
    <interactant intactId="EBI-395638">
        <id>O14645</id>
    </interactant>
    <interactant intactId="EBI-372173">
        <id>O77932</id>
        <label>DXO</label>
    </interactant>
    <organismsDiffer>false</organismsDiffer>
    <experiments>3</experiments>
</comment>
<comment type="interaction">
    <interactant intactId="EBI-395638">
        <id>O14645</id>
    </interactant>
    <interactant intactId="EBI-7779316">
        <id>A0AVK6</id>
        <label>E2F8</label>
    </interactant>
    <organismsDiffer>false</organismsDiffer>
    <experiments>3</experiments>
</comment>
<comment type="interaction">
    <interactant intactId="EBI-395638">
        <id>O14645</id>
    </interactant>
    <interactant intactId="EBI-711990">
        <id>O00303</id>
        <label>EIF3F</label>
    </interactant>
    <organismsDiffer>false</organismsDiffer>
    <experiments>3</experiments>
</comment>
<comment type="interaction">
    <interactant intactId="EBI-395638">
        <id>O14645</id>
    </interactant>
    <interactant intactId="EBI-354344">
        <id>Q9UBQ5</id>
        <label>EIF3K</label>
    </interactant>
    <organismsDiffer>false</organismsDiffer>
    <experiments>4</experiments>
</comment>
<comment type="interaction">
    <interactant intactId="EBI-395638">
        <id>O14645</id>
    </interactant>
    <interactant intactId="EBI-10213520">
        <id>Q6NXG1</id>
        <label>ESRP1</label>
    </interactant>
    <organismsDiffer>false</organismsDiffer>
    <experiments>3</experiments>
</comment>
<comment type="interaction">
    <interactant intactId="EBI-395638">
        <id>O14645</id>
    </interactant>
    <interactant intactId="EBI-21567429">
        <id>Q6NXG1-3</id>
        <label>ESRP1</label>
    </interactant>
    <organismsDiffer>false</organismsDiffer>
    <experiments>3</experiments>
</comment>
<comment type="interaction">
    <interactant intactId="EBI-395638">
        <id>O14645</id>
    </interactant>
    <interactant intactId="EBI-25835236">
        <id>Q49AJ0-4</id>
        <label>FAM135B</label>
    </interactant>
    <organismsDiffer>false</organismsDiffer>
    <experiments>3</experiments>
</comment>
<comment type="interaction">
    <interactant intactId="EBI-395638">
        <id>O14645</id>
    </interactant>
    <interactant intactId="EBI-3909329">
        <id>Q9NSA1</id>
        <label>FGF21</label>
    </interactant>
    <organismsDiffer>false</organismsDiffer>
    <experiments>3</experiments>
</comment>
<comment type="interaction">
    <interactant intactId="EBI-395638">
        <id>O14645</id>
    </interactant>
    <interactant intactId="EBI-10691738">
        <id>P06241-3</id>
        <label>FYN</label>
    </interactant>
    <organismsDiffer>false</organismsDiffer>
    <experiments>3</experiments>
</comment>
<comment type="interaction">
    <interactant intactId="EBI-395638">
        <id>O14645</id>
    </interactant>
    <interactant intactId="EBI-9088619">
        <id>Q06547-3</id>
        <label>GABPB1</label>
    </interactant>
    <organismsDiffer>false</organismsDiffer>
    <experiments>3</experiments>
</comment>
<comment type="interaction">
    <interactant intactId="EBI-395638">
        <id>O14645</id>
    </interactant>
    <interactant intactId="EBI-2857315">
        <id>Q9BRX5</id>
        <label>GINS3</label>
    </interactant>
    <organismsDiffer>false</organismsDiffer>
    <experiments>3</experiments>
</comment>
<comment type="interaction">
    <interactant intactId="EBI-395638">
        <id>O14645</id>
    </interactant>
    <interactant intactId="EBI-750953">
        <id>Q96IJ6</id>
        <label>GMPPA</label>
    </interactant>
    <organismsDiffer>false</organismsDiffer>
    <experiments>3</experiments>
</comment>
<comment type="interaction">
    <interactant intactId="EBI-395638">
        <id>O14645</id>
    </interactant>
    <interactant intactId="EBI-466029">
        <id>P42858</id>
        <label>HTT</label>
    </interactant>
    <organismsDiffer>false</organismsDiffer>
    <experiments>15</experiments>
</comment>
<comment type="interaction">
    <interactant intactId="EBI-395638">
        <id>O14645</id>
    </interactant>
    <interactant intactId="EBI-12823003">
        <id>P80217-2</id>
        <label>IFI35</label>
    </interactant>
    <organismsDiffer>false</organismsDiffer>
    <experiments>3</experiments>
</comment>
<comment type="interaction">
    <interactant intactId="EBI-395638">
        <id>O14645</id>
    </interactant>
    <interactant intactId="EBI-10220600">
        <id>Q8NA54</id>
        <label>IQUB</label>
    </interactant>
    <organismsDiffer>false</organismsDiffer>
    <experiments>3</experiments>
</comment>
<comment type="interaction">
    <interactant intactId="EBI-395638">
        <id>O14645</id>
    </interactant>
    <interactant intactId="EBI-712105">
        <id>Q13352</id>
        <label>ITGB3BP</label>
    </interactant>
    <organismsDiffer>false</organismsDiffer>
    <experiments>3</experiments>
</comment>
<comment type="interaction">
    <interactant intactId="EBI-395638">
        <id>O14645</id>
    </interactant>
    <interactant intactId="EBI-2796400">
        <id>Q9UIH9</id>
        <label>KLF15</label>
    </interactant>
    <organismsDiffer>false</organismsDiffer>
    <experiments>3</experiments>
</comment>
<comment type="interaction">
    <interactant intactId="EBI-395638">
        <id>O14645</id>
    </interactant>
    <interactant intactId="EBI-2696013">
        <id>Q13887</id>
        <label>KLF5</label>
    </interactant>
    <organismsDiffer>false</organismsDiffer>
    <experiments>3</experiments>
</comment>
<comment type="interaction">
    <interactant intactId="EBI-395638">
        <id>O14645</id>
    </interactant>
    <interactant intactId="EBI-9088829">
        <id>Q6DKI2</id>
        <label>LGALS9C</label>
    </interactant>
    <organismsDiffer>false</organismsDiffer>
    <experiments>3</experiments>
</comment>
<comment type="interaction">
    <interactant intactId="EBI-395638">
        <id>O14645</id>
    </interactant>
    <interactant intactId="EBI-2350424">
        <id>Q9BV99</id>
        <label>LRRC61</label>
    </interactant>
    <organismsDiffer>false</organismsDiffer>
    <experiments>3</experiments>
</comment>
<comment type="interaction">
    <interactant intactId="EBI-395638">
        <id>O14645</id>
    </interactant>
    <interactant intactId="EBI-741037">
        <id>Q9BRK4</id>
        <label>LZTS2</label>
    </interactant>
    <organismsDiffer>false</organismsDiffer>
    <experiments>3</experiments>
</comment>
<comment type="interaction">
    <interactant intactId="EBI-395638">
        <id>O14645</id>
    </interactant>
    <interactant intactId="EBI-8487781">
        <id>Q8N6F8</id>
        <label>METTL27</label>
    </interactant>
    <organismsDiffer>false</organismsDiffer>
    <experiments>3</experiments>
</comment>
<comment type="interaction">
    <interactant intactId="EBI-395638">
        <id>O14645</id>
    </interactant>
    <interactant intactId="EBI-11991020">
        <id>A6NI15</id>
        <label>MSGN1</label>
    </interactant>
    <organismsDiffer>false</organismsDiffer>
    <experiments>3</experiments>
</comment>
<comment type="interaction">
    <interactant intactId="EBI-395638">
        <id>O14645</id>
    </interactant>
    <interactant intactId="EBI-996616">
        <id>P02795</id>
        <label>MT2A</label>
    </interactant>
    <organismsDiffer>false</organismsDiffer>
    <experiments>3</experiments>
</comment>
<comment type="interaction">
    <interactant intactId="EBI-395638">
        <id>O14645</id>
    </interactant>
    <interactant intactId="EBI-1058491">
        <id>Q96FW1</id>
        <label>OTUB1</label>
    </interactant>
    <organismsDiffer>false</organismsDiffer>
    <experiments>3</experiments>
</comment>
<comment type="interaction">
    <interactant intactId="EBI-395638">
        <id>O14645</id>
    </interactant>
    <interactant intactId="EBI-25830200">
        <id>Q6GQQ9-2</id>
        <label>OTUD7B</label>
    </interactant>
    <organismsDiffer>false</organismsDiffer>
    <experiments>3</experiments>
</comment>
<comment type="interaction">
    <interactant intactId="EBI-395638">
        <id>O14645</id>
    </interactant>
    <interactant intactId="EBI-10488185">
        <id>Q9ULW8</id>
        <label>PADI3</label>
    </interactant>
    <organismsDiffer>false</organismsDiffer>
    <experiments>3</experiments>
</comment>
<comment type="interaction">
    <interactant intactId="EBI-395638">
        <id>O14645</id>
    </interactant>
    <interactant intactId="EBI-2957445">
        <id>Q9BPZ3</id>
        <label>PAIP2</label>
    </interactant>
    <organismsDiffer>false</organismsDiffer>
    <experiments>3</experiments>
</comment>
<comment type="interaction">
    <interactant intactId="EBI-395638">
        <id>O14645</id>
    </interactant>
    <interactant intactId="EBI-17630288">
        <id>P57054</id>
        <label>PIGP</label>
    </interactant>
    <organismsDiffer>false</organismsDiffer>
    <experiments>3</experiments>
</comment>
<comment type="interaction">
    <interactant intactId="EBI-395638">
        <id>O14645</id>
    </interactant>
    <interactant intactId="EBI-25835994">
        <id>Q6ZMI0-5</id>
        <label>PPP1R21</label>
    </interactant>
    <organismsDiffer>false</organismsDiffer>
    <experiments>3</experiments>
</comment>
<comment type="interaction">
    <interactant intactId="EBI-395638">
        <id>O14645</id>
    </interactant>
    <interactant intactId="EBI-912440">
        <id>Q96LA8</id>
        <label>PRMT6</label>
    </interactant>
    <organismsDiffer>false</organismsDiffer>
    <experiments>2</experiments>
</comment>
<comment type="interaction">
    <interactant intactId="EBI-395638">
        <id>O14645</id>
    </interactant>
    <interactant intactId="EBI-722307">
        <id>P47736</id>
        <label>RAP1GAP</label>
    </interactant>
    <organismsDiffer>false</organismsDiffer>
    <experiments>3</experiments>
</comment>
<comment type="interaction">
    <interactant intactId="EBI-395638">
        <id>O14645</id>
    </interactant>
    <interactant intactId="EBI-745810">
        <id>Q96EN9</id>
        <label>REX1BD</label>
    </interactant>
    <organismsDiffer>false</organismsDiffer>
    <experiments>3</experiments>
</comment>
<comment type="interaction">
    <interactant intactId="EBI-395638">
        <id>O14645</id>
    </interactant>
    <interactant intactId="EBI-25834767">
        <id>P47804-3</id>
        <label>RGR</label>
    </interactant>
    <organismsDiffer>false</organismsDiffer>
    <experiments>3</experiments>
</comment>
<comment type="interaction">
    <interactant intactId="EBI-395638">
        <id>O14645</id>
    </interactant>
    <interactant intactId="EBI-948111">
        <id>Q96EP0</id>
        <label>RNF31</label>
    </interactant>
    <organismsDiffer>false</organismsDiffer>
    <experiments>3</experiments>
</comment>
<comment type="interaction">
    <interactant intactId="EBI-395638">
        <id>O14645</id>
    </interactant>
    <interactant intactId="EBI-747107">
        <id>Q8IUQ4</id>
        <label>SIAH1</label>
    </interactant>
    <organismsDiffer>false</organismsDiffer>
    <experiments>3</experiments>
</comment>
<comment type="interaction">
    <interactant intactId="EBI-395638">
        <id>O14645</id>
    </interactant>
    <interactant intactId="EBI-358489">
        <id>Q96GM5</id>
        <label>SMARCD1</label>
    </interactant>
    <organismsDiffer>false</organismsDiffer>
    <experiments>3</experiments>
</comment>
<comment type="interaction">
    <interactant intactId="EBI-395638">
        <id>O14645</id>
    </interactant>
    <interactant intactId="EBI-10696971">
        <id>Q7Z6I5</id>
        <label>SPATA12</label>
    </interactant>
    <organismsDiffer>false</organismsDiffer>
    <experiments>3</experiments>
</comment>
<comment type="interaction">
    <interactant intactId="EBI-395638">
        <id>O14645</id>
    </interactant>
    <interactant intactId="EBI-765729">
        <id>Q9BZK7</id>
        <label>TBL1XR1</label>
    </interactant>
    <organismsDiffer>false</organismsDiffer>
    <experiments>3</experiments>
</comment>
<comment type="interaction">
    <interactant intactId="EBI-395638">
        <id>O14645</id>
    </interactant>
    <interactant intactId="EBI-2800552">
        <id>Q3YBR2</id>
        <label>TBRG1</label>
    </interactant>
    <organismsDiffer>false</organismsDiffer>
    <experiments>3</experiments>
</comment>
<comment type="interaction">
    <interactant intactId="EBI-395638">
        <id>O14645</id>
    </interactant>
    <interactant intactId="EBI-17438286">
        <id>Q8WTV1</id>
        <label>THAP3</label>
    </interactant>
    <organismsDiffer>false</organismsDiffer>
    <experiments>3</experiments>
</comment>
<comment type="interaction">
    <interactant intactId="EBI-395638">
        <id>O14645</id>
    </interactant>
    <interactant intactId="EBI-9089156">
        <id>Q8IUR5-4</id>
        <label>TMTC1</label>
    </interactant>
    <organismsDiffer>false</organismsDiffer>
    <experiments>3</experiments>
</comment>
<comment type="interaction">
    <interactant intactId="EBI-395638">
        <id>O14645</id>
    </interactant>
    <interactant intactId="EBI-396540">
        <id>Q12888</id>
        <label>TP53BP1</label>
    </interactant>
    <organismsDiffer>false</organismsDiffer>
    <experiments>3</experiments>
</comment>
<comment type="interaction">
    <interactant intactId="EBI-395638">
        <id>O14645</id>
    </interactant>
    <interactant intactId="EBI-12806590">
        <id>Q86WV8</id>
        <label>TSC1</label>
    </interactant>
    <organismsDiffer>false</organismsDiffer>
    <experiments>3</experiments>
</comment>
<comment type="interaction">
    <interactant intactId="EBI-395638">
        <id>O14645</id>
    </interactant>
    <interactant intactId="EBI-2555404">
        <id>Q6PID6</id>
        <label>TTC33</label>
    </interactant>
    <organismsDiffer>false</organismsDiffer>
    <experiments>3</experiments>
</comment>
<comment type="interaction">
    <interactant intactId="EBI-395638">
        <id>O14645</id>
    </interactant>
    <interactant intactId="EBI-2339348">
        <id>P49459</id>
        <label>UBE2A</label>
    </interactant>
    <organismsDiffer>false</organismsDiffer>
    <experiments>3</experiments>
</comment>
<comment type="interaction">
    <interactant intactId="EBI-395638">
        <id>O14645</id>
    </interactant>
    <interactant intactId="EBI-6427899">
        <id>P58304</id>
        <label>VSX2</label>
    </interactant>
    <organismsDiffer>false</organismsDiffer>
    <experiments>3</experiments>
</comment>
<comment type="interaction">
    <interactant intactId="EBI-395638">
        <id>O14645</id>
    </interactant>
    <interactant intactId="EBI-7705033">
        <id>Q9BRX9</id>
        <label>WDR83</label>
    </interactant>
    <organismsDiffer>false</organismsDiffer>
    <experiments>3</experiments>
</comment>
<comment type="interaction">
    <interactant intactId="EBI-395638">
        <id>O14645</id>
    </interactant>
    <interactant intactId="EBI-21659356">
        <id>Q86U90</id>
        <label>YRDC</label>
    </interactant>
    <organismsDiffer>false</organismsDiffer>
    <experiments>3</experiments>
</comment>
<comment type="interaction">
    <interactant intactId="EBI-395638">
        <id>O14645</id>
    </interactant>
    <interactant intactId="EBI-25835852">
        <id>Q96JL9-2</id>
        <label>ZNF333</label>
    </interactant>
    <organismsDiffer>false</organismsDiffer>
    <experiments>3</experiments>
</comment>
<comment type="interaction">
    <interactant intactId="EBI-395638">
        <id>O14645</id>
    </interactant>
    <interactant intactId="EBI-25831733">
        <id>Q96MN9-2</id>
        <label>ZNF488</label>
    </interactant>
    <organismsDiffer>false</organismsDiffer>
    <experiments>3</experiments>
</comment>
<comment type="interaction">
    <interactant intactId="EBI-395638">
        <id>O14645</id>
    </interactant>
    <interactant intactId="EBI-1538838">
        <id>Q2QGD7</id>
        <label>ZXDC</label>
    </interactant>
    <organismsDiffer>false</organismsDiffer>
    <experiments>3</experiments>
</comment>
<comment type="interaction">
    <interactant intactId="EBI-395638">
        <id>O14645</id>
    </interactant>
    <interactant intactId="EBI-25831617">
        <id>B7Z3E8</id>
    </interactant>
    <organismsDiffer>false</organismsDiffer>
    <experiments>3</experiments>
</comment>
<comment type="subcellular location">
    <subcellularLocation>
        <location evidence="6">Cell projection</location>
        <location evidence="6">Cilium</location>
    </subcellularLocation>
    <subcellularLocation>
        <location evidence="7">Cell projection</location>
        <location evidence="7">Cilium</location>
        <location evidence="7">Flagellum</location>
    </subcellularLocation>
    <subcellularLocation>
        <location evidence="1">Dynein axonemal particle</location>
    </subcellularLocation>
    <subcellularLocation>
        <location evidence="9">Cytoplasm</location>
    </subcellularLocation>
</comment>
<comment type="alternative products">
    <event type="alternative splicing"/>
    <isoform>
        <id>O14645-1</id>
        <name>1</name>
        <sequence type="displayed"/>
    </isoform>
    <isoform>
        <id>O14645-2</id>
        <name>2</name>
        <sequence type="described" ref="VSP_056965 VSP_056966"/>
    </isoform>
</comment>
<comment type="tissue specificity">
    <text evidence="7">Expressed in many tissues. A smaller 0.9 kb and a larger 2.5 kb transcripts were detected at the highest level in the testis, at medium levels in the prostate, heart, liver, lung and pancreas, at low levels in the ovary, skeletal muscle and small intestine. Not detected in spleen, colon epithelium, thymus or peripheral blood leukocytes. The 0.9 kb transcript is expressed at a 20-fold higher level than the 2.5 kb transcript in the testis. Expressed in spermatozoa and airway epithelial cells (at protein level) (PubMed:31178125).</text>
</comment>
<comment type="disease" evidence="9">
    <disease id="DI-06668">
        <name>Spermatogenic failure 83</name>
        <acronym>SPGF83</acronym>
        <description>An autosomal recessive male infertility disorder characterized by asthenoteratozoospermia. Patient sperm exhibit an asymmetric fibrous sheath of the flagella.</description>
        <dbReference type="MIM" id="620354"/>
    </disease>
    <text>The disease may be caused by variants affecting the gene represented in this entry.</text>
</comment>
<comment type="similarity">
    <text evidence="11">Belongs to the inner dynein arm light chain family.</text>
</comment>
<comment type="sequence caution" evidence="11">
    <conflict type="frameshift">
        <sequence resource="EMBL-CDS" id="AAB69193"/>
    </conflict>
</comment>
<comment type="sequence caution" evidence="11">
    <conflict type="erroneous initiation">
        <sequence resource="EMBL-CDS" id="CAI46082"/>
    </conflict>
    <text>Truncated N-terminus.</text>
</comment>
<proteinExistence type="evidence at protein level"/>
<protein>
    <recommendedName>
        <fullName evidence="11">Axonemal dynein light intermediate polypeptide 1</fullName>
    </recommendedName>
    <alternativeName>
        <fullName>Inner dynein arm light chain, axonemal</fullName>
    </alternativeName>
    <alternativeName>
        <fullName>hp28</fullName>
    </alternativeName>
</protein>
<feature type="chain" id="PRO_0000114675" description="Axonemal dynein light intermediate polypeptide 1">
    <location>
        <begin position="1"/>
        <end position="258"/>
    </location>
</feature>
<feature type="region of interest" description="Disordered" evidence="4">
    <location>
        <begin position="1"/>
        <end position="60"/>
    </location>
</feature>
<feature type="region of interest" description="Disordered" evidence="4">
    <location>
        <begin position="207"/>
        <end position="231"/>
    </location>
</feature>
<feature type="coiled-coil region" evidence="3">
    <location>
        <begin position="176"/>
        <end position="255"/>
    </location>
</feature>
<feature type="compositionally biased region" description="Low complexity" evidence="4">
    <location>
        <begin position="34"/>
        <end position="44"/>
    </location>
</feature>
<feature type="splice variant" id="VSP_056965" description="In isoform 2." evidence="10">
    <original>MIPPAD</original>
    <variation>MPYYPQ</variation>
    <location>
        <begin position="1"/>
        <end position="6"/>
    </location>
</feature>
<feature type="splice variant" id="VSP_056966" description="In isoform 2." evidence="10">
    <location>
        <begin position="7"/>
        <end position="132"/>
    </location>
</feature>
<feature type="sequence variant" id="VAR_014473" description="In dbSNP:rs11749.">
    <original>A</original>
    <variation>V</variation>
    <location>
        <position position="65"/>
    </location>
</feature>
<feature type="sequence variant" id="VAR_035701" description="In a colorectal cancer sample; somatic mutation; dbSNP:rs1266159589." evidence="5">
    <original>I</original>
    <variation>M</variation>
    <location>
        <position position="120"/>
    </location>
</feature>
<feature type="sequence conflict" description="In Ref. 3; CAI46082." evidence="11" ref="3">
    <original>S</original>
    <variation>P</variation>
    <location>
        <position position="54"/>
    </location>
</feature>
<feature type="sequence conflict" description="In Ref. 2; BAF83191." evidence="11" ref="2">
    <original>R</original>
    <variation>K</variation>
    <location>
        <position position="76"/>
    </location>
</feature>
<feature type="sequence conflict" description="In Ref. 1; AAB69193." evidence="11" ref="1">
    <original>R</original>
    <variation>Q</variation>
    <location>
        <position position="152"/>
    </location>
</feature>
<evidence type="ECO:0000250" key="1">
    <source>
        <dbReference type="UniProtKB" id="Q6GN86"/>
    </source>
</evidence>
<evidence type="ECO:0000250" key="2">
    <source>
        <dbReference type="UniProtKB" id="Q8BVN8"/>
    </source>
</evidence>
<evidence type="ECO:0000255" key="3"/>
<evidence type="ECO:0000256" key="4">
    <source>
        <dbReference type="SAM" id="MobiDB-lite"/>
    </source>
</evidence>
<evidence type="ECO:0000269" key="5">
    <source>
    </source>
</evidence>
<evidence type="ECO:0000269" key="6">
    <source>
    </source>
</evidence>
<evidence type="ECO:0000269" key="7">
    <source>
    </source>
</evidence>
<evidence type="ECO:0000269" key="8">
    <source>
    </source>
</evidence>
<evidence type="ECO:0000269" key="9">
    <source>
    </source>
</evidence>
<evidence type="ECO:0000303" key="10">
    <source>
    </source>
</evidence>
<evidence type="ECO:0000305" key="11"/>
<evidence type="ECO:0000312" key="12">
    <source>
        <dbReference type="HGNC" id="HGNC:14353"/>
    </source>
</evidence>
<organism>
    <name type="scientific">Homo sapiens</name>
    <name type="common">Human</name>
    <dbReference type="NCBI Taxonomy" id="9606"/>
    <lineage>
        <taxon>Eukaryota</taxon>
        <taxon>Metazoa</taxon>
        <taxon>Chordata</taxon>
        <taxon>Craniata</taxon>
        <taxon>Vertebrata</taxon>
        <taxon>Euteleostomi</taxon>
        <taxon>Mammalia</taxon>
        <taxon>Eutheria</taxon>
        <taxon>Euarchontoglires</taxon>
        <taxon>Primates</taxon>
        <taxon>Haplorrhini</taxon>
        <taxon>Catarrhini</taxon>
        <taxon>Hominidae</taxon>
        <taxon>Homo</taxon>
    </lineage>
</organism>
<accession>O14645</accession>
<accession>A8K387</accession>
<accession>B4DHN6</accession>
<accession>Q05BL9</accession>
<accession>Q5HYE2</accession>
<accession>Q5TGH0</accession>
<accession>Q7L0I5</accession>
<sequence length="258" mass="29662">MIPPADSLLKYDTPVLVSRNTEKRSPKARLLKVSPQQPGPSGSAPQPPKTKLPSTPCVPDPTKQAEEILNAILPPREWVEDTQLWIQQVSSTPSTRMDVVHLQEQLDLKLQQRQARETGICPVRRELYSQCFDELIREVTINCAERGLLLLRVRDEIRMTIAAYQTLYESSVAFGMRKALQAEQGKSDMERKIAELETEKRDLERQVNEQKAKCEATEKRESERRQVEEKKHNEEIQFLKRTNQQLKAQLEGIIAPKK</sequence>